<sequence>MSAGKLPVDWKTVELGELIKLSTGKLDANAADNDGQYPFFTCAESVSQINSWAFDTSAVLLAGNGSFSIKKYTGKFNAYQRTYVIEPILIKTEFLYWLLRGNIKKITENGRGSTIPYIRKGDITDISVALPSPSEQTLIAEKLDTLLAQVESTKARLEQIPQILKRFRQAVLTFAMNGELTKEWRSQNNNPAFFPAEKNSLKQFRNKELPSIPNNWSWMRFDQVADIASKLKSPLDYPNTIHLAPNHIESWTGKASGYQTILEDGVTSAKHEFYTGQIIYSKIRPYLCKVTIATFDGMCSADMYPINSKIDTHFLFRWMLTNTFTDWASNAESRTVLPKINQKDLSEIPVPTPPLPEQHEIVRRVEQLFAYADTIEKQVNNALARVNNLTQSILAKAFRGELTAQWRAENPDLISGENSAAALLEKIKAERAASGGKKASRKKS</sequence>
<comment type="function">
    <text evidence="1 2">The specificity (S) subunit of a type I restriction enzyme; this subunit dictates DNA sequence specificity. The M and S subunits together form a methyltransferase (MTase) that methylates two adenine residues of the sequence 5'-TTAN(7)GTCY-3'. In the presence of the R subunit the complex can also act as an endonuclease, binding to the same target sequence but cutting the DNA some distance from this site. Whether the DNA is cut or modified depends on the methylation state of the target sequence. When the target site is unmodified, the DNA is cut. When the target site is hemimethylated, the complex acts as a maintenance MTase modifying the DNA so that both strands become methylated. After locating a non-methylated recognition site, the enzyme complex serves as a molecular motor that translocates DNA in an ATP-dependent manner until a collision occurs that triggers cleavage.</text>
</comment>
<comment type="subunit">
    <text evidence="1">The type I restriction/modification system is composed of three polypeptides R, M and S; the restriction enzyme has stoichiometry R(2)M(2)S(1) while the methyltransferase is M(2)S(1).</text>
</comment>
<comment type="domain">
    <text evidence="1">Contains two DNA recognition domains, each specifying recognition of one of the two defined components of the target sequence.</text>
</comment>
<comment type="miscellaneous">
    <text evidence="1">Type I restriction and modification enzymes are complex, multifunctional systems which require ATP, S-adenosyl methionine and Mg(2+) as cofactors and, in addition to their endonucleolytic and methylase activities, are potent DNA-dependent ATPases.</text>
</comment>
<comment type="similarity">
    <text evidence="4">Belongs to the type-I restriction system S methylase family.</text>
</comment>
<reference key="1">
    <citation type="journal article" date="1983" name="J. Mol. Biol.">
        <title>Sequence diversity among related genes for recognition of specific targets in DNA molecules.</title>
        <authorList>
            <person name="Gough J.A."/>
            <person name="Murray N.E."/>
        </authorList>
    </citation>
    <scope>NUCLEOTIDE SEQUENCE [GENOMIC DNA]</scope>
    <source>
        <strain>D / E166</strain>
    </source>
</reference>
<reference key="2">
    <citation type="journal article" date="2003" name="Nucleic Acids Res.">
        <title>A nomenclature for restriction enzymes, DNA methyltransferases, homing endonucleases and their genes.</title>
        <authorList>
            <person name="Roberts R.J."/>
            <person name="Belfort M."/>
            <person name="Bestor T."/>
            <person name="Bhagwat A.S."/>
            <person name="Bickle T.A."/>
            <person name="Bitinaite J."/>
            <person name="Blumenthal R.M."/>
            <person name="Degtyarev S.K."/>
            <person name="Dryden D.T."/>
            <person name="Dybvig K."/>
            <person name="Firman K."/>
            <person name="Gromova E.S."/>
            <person name="Gumport R.I."/>
            <person name="Halford S.E."/>
            <person name="Hattman S."/>
            <person name="Heitman J."/>
            <person name="Hornby D.P."/>
            <person name="Janulaitis A."/>
            <person name="Jeltsch A."/>
            <person name="Josephsen J."/>
            <person name="Kiss A."/>
            <person name="Klaenhammer T.R."/>
            <person name="Kobayashi I."/>
            <person name="Kong H."/>
            <person name="Krueger D.H."/>
            <person name="Lacks S."/>
            <person name="Marinus M.G."/>
            <person name="Miyahara M."/>
            <person name="Morgan R.D."/>
            <person name="Murray N.E."/>
            <person name="Nagaraja V."/>
            <person name="Piekarowicz A."/>
            <person name="Pingoud A."/>
            <person name="Raleigh E."/>
            <person name="Rao D.N."/>
            <person name="Reich N."/>
            <person name="Repin V.E."/>
            <person name="Selker E.U."/>
            <person name="Shaw P.C."/>
            <person name="Stein D.C."/>
            <person name="Stoddard B.L."/>
            <person name="Szybalski W."/>
            <person name="Trautner T.A."/>
            <person name="Van Etten J.L."/>
            <person name="Vitor J.M."/>
            <person name="Wilson G.G."/>
            <person name="Xu S.Y."/>
        </authorList>
    </citation>
    <scope>NOMENCLATURE</scope>
</reference>
<organism>
    <name type="scientific">Escherichia coli</name>
    <dbReference type="NCBI Taxonomy" id="562"/>
    <lineage>
        <taxon>Bacteria</taxon>
        <taxon>Pseudomonadati</taxon>
        <taxon>Pseudomonadota</taxon>
        <taxon>Gammaproteobacteria</taxon>
        <taxon>Enterobacterales</taxon>
        <taxon>Enterobacteriaceae</taxon>
        <taxon>Escherichia</taxon>
    </lineage>
</organism>
<evidence type="ECO:0000250" key="1">
    <source>
        <dbReference type="UniProtKB" id="P05719"/>
    </source>
</evidence>
<evidence type="ECO:0000303" key="2">
    <source>
    </source>
</evidence>
<evidence type="ECO:0000303" key="3">
    <source>
    </source>
</evidence>
<evidence type="ECO:0000305" key="4"/>
<gene>
    <name evidence="3" type="primary">hsdS</name>
    <name type="synonym">hss</name>
</gene>
<keyword id="KW-0238">DNA-binding</keyword>
<keyword id="KW-0680">Restriction system</keyword>
<feature type="chain" id="PRO_0000198033" description="Type I restriction enzyme EcoDI specificity subunit">
    <location>
        <begin position="1"/>
        <end position="444"/>
    </location>
</feature>
<protein>
    <recommendedName>
        <fullName evidence="4">Type I restriction enzyme EcoDI specificity subunit</fullName>
        <shortName>S protein</shortName>
    </recommendedName>
    <alternativeName>
        <fullName evidence="2">Type I specificity subunit S.EcoDI</fullName>
        <shortName evidence="2">S.EcoDI</shortName>
    </alternativeName>
    <alternativeName>
        <fullName>Type-1 restriction enzyme EcoDI specificity subunit</fullName>
    </alternativeName>
</protein>
<dbReference type="EMBL" id="V00287">
    <property type="protein sequence ID" value="CAA23553.1"/>
    <property type="molecule type" value="Genomic_DNA"/>
</dbReference>
<dbReference type="RefSeq" id="WP_088551266.1">
    <property type="nucleotide sequence ID" value="NZ_NLZU01000024.1"/>
</dbReference>
<dbReference type="SMR" id="P06991"/>
<dbReference type="REBASE" id="156147">
    <property type="entry name" value="S.BamRD77ORF2498P"/>
</dbReference>
<dbReference type="REBASE" id="191864">
    <property type="entry name" value="S.Apa1447ORF2453P"/>
</dbReference>
<dbReference type="REBASE" id="3640">
    <property type="entry name" value="S.EcoDI"/>
</dbReference>
<dbReference type="PRO" id="PR:P06991"/>
<dbReference type="GO" id="GO:0003677">
    <property type="term" value="F:DNA binding"/>
    <property type="evidence" value="ECO:0007669"/>
    <property type="project" value="UniProtKB-KW"/>
</dbReference>
<dbReference type="GO" id="GO:0009307">
    <property type="term" value="P:DNA restriction-modification system"/>
    <property type="evidence" value="ECO:0007669"/>
    <property type="project" value="UniProtKB-KW"/>
</dbReference>
<dbReference type="CDD" id="cd17269">
    <property type="entry name" value="RMtype1_S_PluTORF4319P-TRD2-CR2_like"/>
    <property type="match status" value="1"/>
</dbReference>
<dbReference type="Gene3D" id="3.90.220.20">
    <property type="entry name" value="DNA methylase specificity domains"/>
    <property type="match status" value="2"/>
</dbReference>
<dbReference type="InterPro" id="IPR000055">
    <property type="entry name" value="Restrct_endonuc_typeI_TRD"/>
</dbReference>
<dbReference type="InterPro" id="IPR044946">
    <property type="entry name" value="Restrct_endonuc_typeI_TRD_sf"/>
</dbReference>
<dbReference type="InterPro" id="IPR051212">
    <property type="entry name" value="Type-I_RE_S_subunit"/>
</dbReference>
<dbReference type="PANTHER" id="PTHR43140:SF1">
    <property type="entry name" value="TYPE I RESTRICTION ENZYME ECOKI SPECIFICITY SUBUNIT"/>
    <property type="match status" value="1"/>
</dbReference>
<dbReference type="PANTHER" id="PTHR43140">
    <property type="entry name" value="TYPE-1 RESTRICTION ENZYME ECOKI SPECIFICITY PROTEIN"/>
    <property type="match status" value="1"/>
</dbReference>
<dbReference type="Pfam" id="PF01420">
    <property type="entry name" value="Methylase_S"/>
    <property type="match status" value="2"/>
</dbReference>
<dbReference type="SUPFAM" id="SSF116734">
    <property type="entry name" value="DNA methylase specificity domain"/>
    <property type="match status" value="2"/>
</dbReference>
<proteinExistence type="inferred from homology"/>
<accession>P06991</accession>
<name>T1SD_ECOLX</name>